<sequence>MAVSTFSSPTPVFGIAEPPASFSSTAIGWKQPLRFRRTKKPRVISCDYSCIEVRDVCYRPPGTQLNILNGVNFSLREKSFGLIFGKSGSGKTTLLQLLAGLNKPTSGSICIQGYGDDGQPKADPDLLPTEKVGIVFQFPERFFVADNVLDEITFGWPRQKGSLQLKEQLTSNLQRAFNWVGLDSIPLDKDPQLLSGGYKRRLALAIQLVQTPDLLILDEPLAGLDWKARADVAKLLKHLKKELTLLVVSHDLRELAALVDQSWRMETGGVLVAERPPL</sequence>
<name>AB11I_ARATH</name>
<dbReference type="EMBL" id="AB007650">
    <property type="protein sequence ID" value="BAB08289.1"/>
    <property type="status" value="ALT_SEQ"/>
    <property type="molecule type" value="Genomic_DNA"/>
</dbReference>
<dbReference type="EMBL" id="CP002688">
    <property type="protein sequence ID" value="AED91987.1"/>
    <property type="molecule type" value="Genomic_DNA"/>
</dbReference>
<dbReference type="EMBL" id="AK118738">
    <property type="protein sequence ID" value="BAC43332.1"/>
    <property type="molecule type" value="mRNA"/>
</dbReference>
<dbReference type="EMBL" id="BT006054">
    <property type="protein sequence ID" value="AAP04039.1"/>
    <property type="molecule type" value="mRNA"/>
</dbReference>
<dbReference type="EMBL" id="AY085446">
    <property type="protein sequence ID" value="AAM62672.1"/>
    <property type="molecule type" value="mRNA"/>
</dbReference>
<dbReference type="RefSeq" id="NP_196914.1">
    <property type="nucleotide sequence ID" value="NM_121413.2"/>
</dbReference>
<dbReference type="SMR" id="Q8LEF6"/>
<dbReference type="FunCoup" id="Q8LEF6">
    <property type="interactions" value="518"/>
</dbReference>
<dbReference type="STRING" id="3702.Q8LEF6"/>
<dbReference type="PaxDb" id="3702-AT5G14100.1"/>
<dbReference type="ProteomicsDB" id="245096"/>
<dbReference type="EnsemblPlants" id="AT5G14100.1">
    <property type="protein sequence ID" value="AT5G14100.1"/>
    <property type="gene ID" value="AT5G14100"/>
</dbReference>
<dbReference type="GeneID" id="831259"/>
<dbReference type="Gramene" id="AT5G14100.1">
    <property type="protein sequence ID" value="AT5G14100.1"/>
    <property type="gene ID" value="AT5G14100"/>
</dbReference>
<dbReference type="KEGG" id="ath:AT5G14100"/>
<dbReference type="Araport" id="AT5G14100"/>
<dbReference type="TAIR" id="AT5G14100">
    <property type="gene designation" value="ABCI11"/>
</dbReference>
<dbReference type="eggNOG" id="KOG0055">
    <property type="taxonomic scope" value="Eukaryota"/>
</dbReference>
<dbReference type="HOGENOM" id="CLU_000604_1_22_1"/>
<dbReference type="InParanoid" id="Q8LEF6"/>
<dbReference type="OMA" id="SWKMEMG"/>
<dbReference type="OrthoDB" id="10255969at2759"/>
<dbReference type="PhylomeDB" id="Q8LEF6"/>
<dbReference type="PRO" id="PR:Q8LEF6"/>
<dbReference type="Proteomes" id="UP000006548">
    <property type="component" value="Chromosome 5"/>
</dbReference>
<dbReference type="ExpressionAtlas" id="Q8LEF6">
    <property type="expression patterns" value="baseline and differential"/>
</dbReference>
<dbReference type="GO" id="GO:0009507">
    <property type="term" value="C:chloroplast"/>
    <property type="evidence" value="ECO:0007005"/>
    <property type="project" value="TAIR"/>
</dbReference>
<dbReference type="GO" id="GO:0009941">
    <property type="term" value="C:chloroplast envelope"/>
    <property type="evidence" value="ECO:0007005"/>
    <property type="project" value="TAIR"/>
</dbReference>
<dbReference type="GO" id="GO:0009706">
    <property type="term" value="C:chloroplast inner membrane"/>
    <property type="evidence" value="ECO:0000314"/>
    <property type="project" value="TAIR"/>
</dbReference>
<dbReference type="GO" id="GO:0005524">
    <property type="term" value="F:ATP binding"/>
    <property type="evidence" value="ECO:0007669"/>
    <property type="project" value="UniProtKB-KW"/>
</dbReference>
<dbReference type="GO" id="GO:0016887">
    <property type="term" value="F:ATP hydrolysis activity"/>
    <property type="evidence" value="ECO:0007669"/>
    <property type="project" value="InterPro"/>
</dbReference>
<dbReference type="GO" id="GO:0009658">
    <property type="term" value="P:chloroplast organization"/>
    <property type="evidence" value="ECO:0000315"/>
    <property type="project" value="TAIR"/>
</dbReference>
<dbReference type="GO" id="GO:0055085">
    <property type="term" value="P:transmembrane transport"/>
    <property type="evidence" value="ECO:0007669"/>
    <property type="project" value="InterPro"/>
</dbReference>
<dbReference type="CDD" id="cd03225">
    <property type="entry name" value="ABC_cobalt_CbiO_domain1"/>
    <property type="match status" value="1"/>
</dbReference>
<dbReference type="FunFam" id="3.40.50.300:FF:001645">
    <property type="entry name" value="ABC transporter I family member 11 chloroplastic"/>
    <property type="match status" value="1"/>
</dbReference>
<dbReference type="Gene3D" id="3.40.50.300">
    <property type="entry name" value="P-loop containing nucleotide triphosphate hydrolases"/>
    <property type="match status" value="1"/>
</dbReference>
<dbReference type="InterPro" id="IPR003593">
    <property type="entry name" value="AAA+_ATPase"/>
</dbReference>
<dbReference type="InterPro" id="IPR003439">
    <property type="entry name" value="ABC_transporter-like_ATP-bd"/>
</dbReference>
<dbReference type="InterPro" id="IPR015856">
    <property type="entry name" value="ABC_transpr_CbiO/EcfA_su"/>
</dbReference>
<dbReference type="InterPro" id="IPR050095">
    <property type="entry name" value="ECF_ABC_transporter_ATP-bd"/>
</dbReference>
<dbReference type="InterPro" id="IPR027417">
    <property type="entry name" value="P-loop_NTPase"/>
</dbReference>
<dbReference type="PANTHER" id="PTHR43553:SF1">
    <property type="entry name" value="ABC TRANSPORTER I FAMILY MEMBER 11, CHLOROPLASTIC"/>
    <property type="match status" value="1"/>
</dbReference>
<dbReference type="PANTHER" id="PTHR43553">
    <property type="entry name" value="HEAVY METAL TRANSPORTER"/>
    <property type="match status" value="1"/>
</dbReference>
<dbReference type="Pfam" id="PF00005">
    <property type="entry name" value="ABC_tran"/>
    <property type="match status" value="1"/>
</dbReference>
<dbReference type="SMART" id="SM00382">
    <property type="entry name" value="AAA"/>
    <property type="match status" value="1"/>
</dbReference>
<dbReference type="SUPFAM" id="SSF52540">
    <property type="entry name" value="P-loop containing nucleoside triphosphate hydrolases"/>
    <property type="match status" value="1"/>
</dbReference>
<dbReference type="PROSITE" id="PS50893">
    <property type="entry name" value="ABC_TRANSPORTER_2"/>
    <property type="match status" value="1"/>
</dbReference>
<proteinExistence type="evidence at transcript level"/>
<gene>
    <name type="primary">ABCI11</name>
    <name type="synonym">NAP14</name>
    <name type="ordered locus">At5g14100</name>
    <name type="ORF">MUA22.10</name>
</gene>
<feature type="transit peptide" description="Chloroplast" evidence="1">
    <location>
        <begin position="1"/>
        <end position="49"/>
    </location>
</feature>
<feature type="chain" id="PRO_0000250665" description="ABC transporter I family member 11, chloroplastic">
    <location>
        <begin position="50"/>
        <end position="278"/>
    </location>
</feature>
<feature type="domain" description="ABC transporter" evidence="2">
    <location>
        <begin position="51"/>
        <end position="278"/>
    </location>
</feature>
<feature type="binding site" evidence="2">
    <location>
        <begin position="85"/>
        <end position="92"/>
    </location>
    <ligand>
        <name>ATP</name>
        <dbReference type="ChEBI" id="CHEBI:30616"/>
    </ligand>
</feature>
<reference key="1">
    <citation type="journal article" date="1997" name="DNA Res.">
        <title>Structural analysis of Arabidopsis thaliana chromosome 5. III. Sequence features of the regions of 1,191,918 bp covered by seventeen physically assigned P1 clones.</title>
        <authorList>
            <person name="Nakamura Y."/>
            <person name="Sato S."/>
            <person name="Kaneko T."/>
            <person name="Kotani H."/>
            <person name="Asamizu E."/>
            <person name="Miyajima N."/>
            <person name="Tabata S."/>
        </authorList>
    </citation>
    <scope>NUCLEOTIDE SEQUENCE [LARGE SCALE GENOMIC DNA]</scope>
    <source>
        <strain>cv. Columbia</strain>
    </source>
</reference>
<reference key="2">
    <citation type="journal article" date="2017" name="Plant J.">
        <title>Araport11: a complete reannotation of the Arabidopsis thaliana reference genome.</title>
        <authorList>
            <person name="Cheng C.Y."/>
            <person name="Krishnakumar V."/>
            <person name="Chan A.P."/>
            <person name="Thibaud-Nissen F."/>
            <person name="Schobel S."/>
            <person name="Town C.D."/>
        </authorList>
    </citation>
    <scope>GENOME REANNOTATION</scope>
    <source>
        <strain>cv. Columbia</strain>
    </source>
</reference>
<reference key="3">
    <citation type="journal article" date="2002" name="Science">
        <title>Functional annotation of a full-length Arabidopsis cDNA collection.</title>
        <authorList>
            <person name="Seki M."/>
            <person name="Narusaka M."/>
            <person name="Kamiya A."/>
            <person name="Ishida J."/>
            <person name="Satou M."/>
            <person name="Sakurai T."/>
            <person name="Nakajima M."/>
            <person name="Enju A."/>
            <person name="Akiyama K."/>
            <person name="Oono Y."/>
            <person name="Muramatsu M."/>
            <person name="Hayashizaki Y."/>
            <person name="Kawai J."/>
            <person name="Carninci P."/>
            <person name="Itoh M."/>
            <person name="Ishii Y."/>
            <person name="Arakawa T."/>
            <person name="Shibata K."/>
            <person name="Shinagawa A."/>
            <person name="Shinozaki K."/>
        </authorList>
    </citation>
    <scope>NUCLEOTIDE SEQUENCE [LARGE SCALE MRNA]</scope>
    <source>
        <strain>cv. Columbia</strain>
    </source>
</reference>
<reference key="4">
    <citation type="journal article" date="2003" name="Science">
        <title>Empirical analysis of transcriptional activity in the Arabidopsis genome.</title>
        <authorList>
            <person name="Yamada K."/>
            <person name="Lim J."/>
            <person name="Dale J.M."/>
            <person name="Chen H."/>
            <person name="Shinn P."/>
            <person name="Palm C.J."/>
            <person name="Southwick A.M."/>
            <person name="Wu H.C."/>
            <person name="Kim C.J."/>
            <person name="Nguyen M."/>
            <person name="Pham P.K."/>
            <person name="Cheuk R.F."/>
            <person name="Karlin-Newmann G."/>
            <person name="Liu S.X."/>
            <person name="Lam B."/>
            <person name="Sakano H."/>
            <person name="Wu T."/>
            <person name="Yu G."/>
            <person name="Miranda M."/>
            <person name="Quach H.L."/>
            <person name="Tripp M."/>
            <person name="Chang C.H."/>
            <person name="Lee J.M."/>
            <person name="Toriumi M.J."/>
            <person name="Chan M.M."/>
            <person name="Tang C.C."/>
            <person name="Onodera C.S."/>
            <person name="Deng J.M."/>
            <person name="Akiyama K."/>
            <person name="Ansari Y."/>
            <person name="Arakawa T."/>
            <person name="Banh J."/>
            <person name="Banno F."/>
            <person name="Bowser L."/>
            <person name="Brooks S.Y."/>
            <person name="Carninci P."/>
            <person name="Chao Q."/>
            <person name="Choy N."/>
            <person name="Enju A."/>
            <person name="Goldsmith A.D."/>
            <person name="Gurjal M."/>
            <person name="Hansen N.F."/>
            <person name="Hayashizaki Y."/>
            <person name="Johnson-Hopson C."/>
            <person name="Hsuan V.W."/>
            <person name="Iida K."/>
            <person name="Karnes M."/>
            <person name="Khan S."/>
            <person name="Koesema E."/>
            <person name="Ishida J."/>
            <person name="Jiang P.X."/>
            <person name="Jones T."/>
            <person name="Kawai J."/>
            <person name="Kamiya A."/>
            <person name="Meyers C."/>
            <person name="Nakajima M."/>
            <person name="Narusaka M."/>
            <person name="Seki M."/>
            <person name="Sakurai T."/>
            <person name="Satou M."/>
            <person name="Tamse R."/>
            <person name="Vaysberg M."/>
            <person name="Wallender E.K."/>
            <person name="Wong C."/>
            <person name="Yamamura Y."/>
            <person name="Yuan S."/>
            <person name="Shinozaki K."/>
            <person name="Davis R.W."/>
            <person name="Theologis A."/>
            <person name="Ecker J.R."/>
        </authorList>
    </citation>
    <scope>NUCLEOTIDE SEQUENCE [LARGE SCALE MRNA]</scope>
    <source>
        <strain>cv. Columbia</strain>
    </source>
</reference>
<reference key="5">
    <citation type="submission" date="2002-03" db="EMBL/GenBank/DDBJ databases">
        <title>Full-length cDNA from Arabidopsis thaliana.</title>
        <authorList>
            <person name="Brover V.V."/>
            <person name="Troukhan M.E."/>
            <person name="Alexandrov N.A."/>
            <person name="Lu Y.-P."/>
            <person name="Flavell R.B."/>
            <person name="Feldmann K.A."/>
        </authorList>
    </citation>
    <scope>NUCLEOTIDE SEQUENCE [LARGE SCALE MRNA]</scope>
</reference>
<reference key="6">
    <citation type="journal article" date="2001" name="J. Biol. Chem.">
        <title>The Arabidopsis thaliana ABC protein superfamily, a complete inventory.</title>
        <authorList>
            <person name="Sanchez-Fernandez R."/>
            <person name="Davies T.G."/>
            <person name="Coleman J.O."/>
            <person name="Rea P.A."/>
        </authorList>
    </citation>
    <scope>GENE FAMILY</scope>
    <scope>NOMENCLATURE</scope>
</reference>
<reference key="7">
    <citation type="journal article" date="2008" name="Trends Plant Sci.">
        <title>Plant ABC proteins - a unified nomenclature and updated inventory.</title>
        <authorList>
            <person name="Verrier P.J."/>
            <person name="Bird D."/>
            <person name="Burla B."/>
            <person name="Dassa E."/>
            <person name="Forestier C."/>
            <person name="Geisler M."/>
            <person name="Klein M."/>
            <person name="Kolukisaoglu H.U."/>
            <person name="Lee Y."/>
            <person name="Martinoia E."/>
            <person name="Murphy A."/>
            <person name="Rea P.A."/>
            <person name="Samuels L."/>
            <person name="Schulz B."/>
            <person name="Spalding E.J."/>
            <person name="Yazaki K."/>
            <person name="Theodoulou F.L."/>
        </authorList>
    </citation>
    <scope>GENE FAMILY</scope>
    <scope>NOMENCLATURE</scope>
</reference>
<accession>Q8LEF6</accession>
<accession>Q9FMU0</accession>
<organism>
    <name type="scientific">Arabidopsis thaliana</name>
    <name type="common">Mouse-ear cress</name>
    <dbReference type="NCBI Taxonomy" id="3702"/>
    <lineage>
        <taxon>Eukaryota</taxon>
        <taxon>Viridiplantae</taxon>
        <taxon>Streptophyta</taxon>
        <taxon>Embryophyta</taxon>
        <taxon>Tracheophyta</taxon>
        <taxon>Spermatophyta</taxon>
        <taxon>Magnoliopsida</taxon>
        <taxon>eudicotyledons</taxon>
        <taxon>Gunneridae</taxon>
        <taxon>Pentapetalae</taxon>
        <taxon>rosids</taxon>
        <taxon>malvids</taxon>
        <taxon>Brassicales</taxon>
        <taxon>Brassicaceae</taxon>
        <taxon>Camelineae</taxon>
        <taxon>Arabidopsis</taxon>
    </lineage>
</organism>
<comment type="subcellular location">
    <subcellularLocation>
        <location evidence="3">Plastid</location>
        <location evidence="3">Chloroplast</location>
    </subcellularLocation>
</comment>
<comment type="similarity">
    <text evidence="3">Belongs to the ABC transporter superfamily. ABCI family.</text>
</comment>
<comment type="sequence caution" evidence="3">
    <conflict type="erroneous gene model prediction">
        <sequence resource="EMBL-CDS" id="BAB08289"/>
    </conflict>
</comment>
<keyword id="KW-0067">ATP-binding</keyword>
<keyword id="KW-0150">Chloroplast</keyword>
<keyword id="KW-0547">Nucleotide-binding</keyword>
<keyword id="KW-0934">Plastid</keyword>
<keyword id="KW-1185">Reference proteome</keyword>
<keyword id="KW-0809">Transit peptide</keyword>
<keyword id="KW-0813">Transport</keyword>
<protein>
    <recommendedName>
        <fullName>ABC transporter I family member 11, chloroplastic</fullName>
        <shortName>ABC transporter ABCI.11</shortName>
        <shortName>AtABCI11</shortName>
    </recommendedName>
    <alternativeName>
        <fullName>Non-intrinsic ABC protein 14</fullName>
    </alternativeName>
</protein>
<evidence type="ECO:0000255" key="1"/>
<evidence type="ECO:0000255" key="2">
    <source>
        <dbReference type="PROSITE-ProRule" id="PRU00434"/>
    </source>
</evidence>
<evidence type="ECO:0000305" key="3"/>